<comment type="subcellular location">
    <subcellularLocation>
        <location evidence="4">Secreted</location>
    </subcellularLocation>
</comment>
<comment type="mass spectrometry" mass="1114.51" method="MALDI" evidence="2"/>
<comment type="similarity">
    <text evidence="1">Belongs to the FARP (FMRFamide related peptide) family.</text>
</comment>
<protein>
    <recommendedName>
        <fullName>FMRFamide-4</fullName>
    </recommendedName>
    <alternativeName>
        <fullName evidence="3">SabFMRFamide-4</fullName>
    </alternativeName>
</protein>
<feature type="peptide" id="PRO_0000371763" description="FMRFamide-4">
    <location>
        <begin position="1"/>
        <end position="9"/>
    </location>
</feature>
<feature type="modified residue" description="Phenylalanine amide" evidence="2">
    <location>
        <position position="9"/>
    </location>
</feature>
<reference evidence="4" key="1">
    <citation type="journal article" date="2009" name="Gen. Comp. Endocrinol.">
        <title>Extended FMRFamides in dipteran insects: conservative expression in the neuroendocrine system is accompanied by rapid sequence evolution.</title>
        <authorList>
            <person name="Rahman M.M."/>
            <person name="Fromm B."/>
            <person name="Neupert S."/>
            <person name="Kreusch S."/>
            <person name="Predel R."/>
        </authorList>
    </citation>
    <scope>PROTEIN SEQUENCE</scope>
    <scope>MASS SPECTROMETRY</scope>
    <scope>AMIDATION AT PHE-9</scope>
    <source>
        <tissue evidence="2">Thoracic ganglionic sheath</tissue>
    </source>
</reference>
<proteinExistence type="evidence at protein level"/>
<name>FAR4_SARBU</name>
<sequence length="9" mass="1115">ASNQDFMRF</sequence>
<organism>
    <name type="scientific">Sarcophaga bullata</name>
    <name type="common">Grey flesh fly</name>
    <name type="synonym">Neobellieria bullata</name>
    <dbReference type="NCBI Taxonomy" id="7385"/>
    <lineage>
        <taxon>Eukaryota</taxon>
        <taxon>Metazoa</taxon>
        <taxon>Ecdysozoa</taxon>
        <taxon>Arthropoda</taxon>
        <taxon>Hexapoda</taxon>
        <taxon>Insecta</taxon>
        <taxon>Pterygota</taxon>
        <taxon>Neoptera</taxon>
        <taxon>Endopterygota</taxon>
        <taxon>Diptera</taxon>
        <taxon>Brachycera</taxon>
        <taxon>Muscomorpha</taxon>
        <taxon>Oestroidea</taxon>
        <taxon>Sarcophagidae</taxon>
        <taxon>Sarcophaga</taxon>
        <taxon>Neobellieria</taxon>
    </lineage>
</organism>
<evidence type="ECO:0000255" key="1"/>
<evidence type="ECO:0000269" key="2">
    <source>
    </source>
</evidence>
<evidence type="ECO:0000303" key="3">
    <source>
    </source>
</evidence>
<evidence type="ECO:0000305" key="4"/>
<dbReference type="GO" id="GO:0005576">
    <property type="term" value="C:extracellular region"/>
    <property type="evidence" value="ECO:0007669"/>
    <property type="project" value="UniProtKB-SubCell"/>
</dbReference>
<dbReference type="GO" id="GO:0007218">
    <property type="term" value="P:neuropeptide signaling pathway"/>
    <property type="evidence" value="ECO:0007669"/>
    <property type="project" value="UniProtKB-KW"/>
</dbReference>
<accession>P85477</accession>
<keyword id="KW-0027">Amidation</keyword>
<keyword id="KW-0903">Direct protein sequencing</keyword>
<keyword id="KW-0527">Neuropeptide</keyword>
<keyword id="KW-0964">Secreted</keyword>